<evidence type="ECO:0000250" key="1"/>
<evidence type="ECO:0000250" key="2">
    <source>
        <dbReference type="UniProtKB" id="P18440"/>
    </source>
</evidence>
<evidence type="ECO:0000305" key="3"/>
<dbReference type="EC" id="2.3.1.5"/>
<dbReference type="EMBL" id="X53765">
    <property type="protein sequence ID" value="CAA37785.1"/>
    <property type="molecule type" value="Genomic_DNA"/>
</dbReference>
<dbReference type="EMBL" id="D10108">
    <property type="protein sequence ID" value="BAA00989.1"/>
    <property type="molecule type" value="Genomic_DNA"/>
</dbReference>
<dbReference type="PIR" id="C39870">
    <property type="entry name" value="XYRBM"/>
</dbReference>
<dbReference type="RefSeq" id="XP_008265477.1">
    <property type="nucleotide sequence ID" value="XM_008267255.2"/>
</dbReference>
<dbReference type="SMR" id="P18605"/>
<dbReference type="FunCoup" id="P18605">
    <property type="interactions" value="49"/>
</dbReference>
<dbReference type="STRING" id="9986.ENSOCUP00000024297"/>
<dbReference type="PaxDb" id="9986-ENSOCUP00000024297"/>
<dbReference type="KEGG" id="ocu:100328959"/>
<dbReference type="eggNOG" id="ENOG502RD0D">
    <property type="taxonomic scope" value="Eukaryota"/>
</dbReference>
<dbReference type="InParanoid" id="P18605"/>
<dbReference type="OrthoDB" id="10260017at2759"/>
<dbReference type="TreeFam" id="TF106311"/>
<dbReference type="Proteomes" id="UP000001811">
    <property type="component" value="Unplaced"/>
</dbReference>
<dbReference type="GO" id="GO:0005737">
    <property type="term" value="C:cytoplasm"/>
    <property type="evidence" value="ECO:0007669"/>
    <property type="project" value="UniProtKB-SubCell"/>
</dbReference>
<dbReference type="GO" id="GO:0004060">
    <property type="term" value="F:arylamine N-acetyltransferase activity"/>
    <property type="evidence" value="ECO:0007669"/>
    <property type="project" value="UniProtKB-EC"/>
</dbReference>
<dbReference type="FunFam" id="3.30.2140.20:FF:000001">
    <property type="entry name" value="Arylamine N-acetyltransferase 1"/>
    <property type="match status" value="1"/>
</dbReference>
<dbReference type="Gene3D" id="3.30.2140.20">
    <property type="match status" value="1"/>
</dbReference>
<dbReference type="InterPro" id="IPR001447">
    <property type="entry name" value="Arylamine_N-AcTrfase"/>
</dbReference>
<dbReference type="InterPro" id="IPR053710">
    <property type="entry name" value="Arylamine_NAT_domain_sf"/>
</dbReference>
<dbReference type="InterPro" id="IPR038765">
    <property type="entry name" value="Papain-like_cys_pep_sf"/>
</dbReference>
<dbReference type="PANTHER" id="PTHR11786:SF8">
    <property type="entry name" value="ARYLAMINE N-ACETYLTRANSFERASE 1"/>
    <property type="match status" value="1"/>
</dbReference>
<dbReference type="PANTHER" id="PTHR11786">
    <property type="entry name" value="N-HYDROXYARYLAMINE O-ACETYLTRANSFERASE"/>
    <property type="match status" value="1"/>
</dbReference>
<dbReference type="Pfam" id="PF00797">
    <property type="entry name" value="Acetyltransf_2"/>
    <property type="match status" value="1"/>
</dbReference>
<dbReference type="PRINTS" id="PR01543">
    <property type="entry name" value="ANATRNSFRASE"/>
</dbReference>
<dbReference type="SUPFAM" id="SSF54001">
    <property type="entry name" value="Cysteine proteinases"/>
    <property type="match status" value="1"/>
</dbReference>
<feature type="chain" id="PRO_0000107913" description="Arylamine N-acetyltransferase 1">
    <location>
        <begin position="1"/>
        <end position="290"/>
    </location>
</feature>
<feature type="active site" description="Acyl-thioester intermediate" evidence="1">
    <location>
        <position position="68"/>
    </location>
</feature>
<feature type="active site" evidence="1">
    <location>
        <position position="107"/>
    </location>
</feature>
<feature type="active site" evidence="1">
    <location>
        <position position="122"/>
    </location>
</feature>
<feature type="binding site" evidence="1">
    <location>
        <position position="103"/>
    </location>
    <ligand>
        <name>CoA</name>
        <dbReference type="ChEBI" id="CHEBI:57287"/>
    </ligand>
</feature>
<feature type="binding site" evidence="1">
    <location>
        <position position="104"/>
    </location>
    <ligand>
        <name>CoA</name>
        <dbReference type="ChEBI" id="CHEBI:57287"/>
    </ligand>
</feature>
<feature type="binding site" evidence="1">
    <location>
        <begin position="106"/>
        <end position="107"/>
    </location>
    <ligand>
        <name>substrate</name>
    </ligand>
</feature>
<feature type="binding site" evidence="1">
    <location>
        <position position="208"/>
    </location>
    <ligand>
        <name>CoA</name>
        <dbReference type="ChEBI" id="CHEBI:57287"/>
    </ligand>
</feature>
<feature type="binding site" evidence="1">
    <location>
        <position position="214"/>
    </location>
    <ligand>
        <name>CoA</name>
        <dbReference type="ChEBI" id="CHEBI:57287"/>
    </ligand>
</feature>
<feature type="modified residue" description="N-acetylmethionine" evidence="2">
    <location>
        <position position="1"/>
    </location>
</feature>
<feature type="sequence conflict" description="In Ref. 2; BAA00989." evidence="3" ref="2">
    <original>N</original>
    <variation>H</variation>
    <location>
        <position position="285"/>
    </location>
</feature>
<protein>
    <recommendedName>
        <fullName>Arylamine N-acetyltransferase 1</fullName>
        <ecNumber>2.3.1.5</ecNumber>
    </recommendedName>
    <alternativeName>
        <fullName>Arylamide acetylase 1</fullName>
    </alternativeName>
    <alternativeName>
        <fullName>Monomorphic arylamine N-acetyltransferase</fullName>
        <shortName>MNAT</shortName>
    </alternativeName>
    <alternativeName>
        <fullName>N-acetyltransferase type 1</fullName>
        <shortName>NAT-1</shortName>
    </alternativeName>
</protein>
<reference key="1">
    <citation type="journal article" date="1990" name="Nucleic Acids Res.">
        <title>Nucleotide sequence of rabbit NAT1 encoding monomorphic arylamine N-acetyltransferase.</title>
        <authorList>
            <person name="Blum M."/>
            <person name="Heim M."/>
            <person name="Meyer U.A."/>
        </authorList>
    </citation>
    <scope>NUCLEOTIDE SEQUENCE [GENOMIC DNA]</scope>
    <source>
        <strain>New Zealand white</strain>
        <tissue>Liver</tissue>
    </source>
</reference>
<reference key="2">
    <citation type="journal article" date="1991" name="J. Biol. Chem.">
        <title>Molecular and genetic analyses of arylamine N-acetyltransferase polymorphism of rabbit liver.</title>
        <authorList>
            <person name="Sasaki Y."/>
            <person name="Ohsako S."/>
            <person name="Deguchi T."/>
        </authorList>
    </citation>
    <scope>NUCLEOTIDE SEQUENCE [GENOMIC DNA]</scope>
    <source>
        <tissue>Liver</tissue>
    </source>
</reference>
<accession>P18605</accession>
<name>ARY1_RABIT</name>
<comment type="catalytic activity">
    <reaction>
        <text>an arylamine + acetyl-CoA = an N-acetylarylamine + CoA</text>
        <dbReference type="Rhea" id="RHEA:16613"/>
        <dbReference type="ChEBI" id="CHEBI:13790"/>
        <dbReference type="ChEBI" id="CHEBI:50471"/>
        <dbReference type="ChEBI" id="CHEBI:57287"/>
        <dbReference type="ChEBI" id="CHEBI:57288"/>
        <dbReference type="EC" id="2.3.1.5"/>
    </reaction>
</comment>
<comment type="subcellular location">
    <subcellularLocation>
        <location>Cytoplasm</location>
    </subcellularLocation>
</comment>
<comment type="similarity">
    <text evidence="3">Belongs to the arylamine N-acetyltransferase family.</text>
</comment>
<organism>
    <name type="scientific">Oryctolagus cuniculus</name>
    <name type="common">Rabbit</name>
    <dbReference type="NCBI Taxonomy" id="9986"/>
    <lineage>
        <taxon>Eukaryota</taxon>
        <taxon>Metazoa</taxon>
        <taxon>Chordata</taxon>
        <taxon>Craniata</taxon>
        <taxon>Vertebrata</taxon>
        <taxon>Euteleostomi</taxon>
        <taxon>Mammalia</taxon>
        <taxon>Eutheria</taxon>
        <taxon>Euarchontoglires</taxon>
        <taxon>Glires</taxon>
        <taxon>Lagomorpha</taxon>
        <taxon>Leporidae</taxon>
        <taxon>Oryctolagus</taxon>
    </lineage>
</organism>
<keyword id="KW-0007">Acetylation</keyword>
<keyword id="KW-0012">Acyltransferase</keyword>
<keyword id="KW-0963">Cytoplasm</keyword>
<keyword id="KW-1185">Reference proteome</keyword>
<keyword id="KW-0808">Transferase</keyword>
<gene>
    <name type="primary">NAT1</name>
    <name type="synonym">AAC1</name>
</gene>
<proteinExistence type="inferred from homology"/>
<sequence>MDIEAYYQRIGYKNPRNKLDLESLTDIFQHQIRTVPYENLSIHCGESMELDLEAIFDQIVRRNRGGWCLQVNYLLYWALTTTGFETTMLGGFVCGSHTDKYSTGMIHLIVQVTINGRNYIVDAGFGRSYQMWQPVELISGKDQPQVPSIFRLREEGETWYLDQIRRQQHVPDQEFLNSELLERKTHRKLYCFTLQPRTIEEFESANTYLQISPSSPFLDKSICSLQTPEGVHCLVGLILTFRTYNYKENTDLVEFKVLTEEEVEEVLKTIFNISLGKKLVSKNGNLFFTI</sequence>